<keyword id="KW-0067">ATP-binding</keyword>
<keyword id="KW-0342">GTP-binding</keyword>
<keyword id="KW-0547">Nucleotide-binding</keyword>
<proteinExistence type="inferred from homology"/>
<reference key="1">
    <citation type="journal article" date="2003" name="Genome Res.">
        <title>Genome sequence of an M3 strain of Streptococcus pyogenes reveals a large-scale genomic rearrangement in invasive strains and new insights into phage evolution.</title>
        <authorList>
            <person name="Nakagawa I."/>
            <person name="Kurokawa K."/>
            <person name="Yamashita A."/>
            <person name="Nakata M."/>
            <person name="Tomiyasu Y."/>
            <person name="Okahashi N."/>
            <person name="Kawabata S."/>
            <person name="Yamazaki K."/>
            <person name="Shiba T."/>
            <person name="Yasunaga T."/>
            <person name="Hayashi H."/>
            <person name="Hattori M."/>
            <person name="Hamada S."/>
        </authorList>
    </citation>
    <scope>NUCLEOTIDE SEQUENCE [LARGE SCALE GENOMIC DNA]</scope>
    <source>
        <strain>SSI-1</strain>
    </source>
</reference>
<evidence type="ECO:0000255" key="1">
    <source>
        <dbReference type="HAMAP-Rule" id="MF_00636"/>
    </source>
</evidence>
<dbReference type="EMBL" id="BA000034">
    <property type="protein sequence ID" value="BAC64488.1"/>
    <property type="molecule type" value="Genomic_DNA"/>
</dbReference>
<dbReference type="SMR" id="P0DG77"/>
<dbReference type="KEGG" id="sps:SPs1393"/>
<dbReference type="HOGENOM" id="CLU_059558_0_0_9"/>
<dbReference type="GO" id="GO:0005524">
    <property type="term" value="F:ATP binding"/>
    <property type="evidence" value="ECO:0007669"/>
    <property type="project" value="UniProtKB-UniRule"/>
</dbReference>
<dbReference type="GO" id="GO:0005525">
    <property type="term" value="F:GTP binding"/>
    <property type="evidence" value="ECO:0007669"/>
    <property type="project" value="UniProtKB-UniRule"/>
</dbReference>
<dbReference type="Gene3D" id="3.40.50.300">
    <property type="entry name" value="P-loop containing nucleotide triphosphate hydrolases"/>
    <property type="match status" value="1"/>
</dbReference>
<dbReference type="HAMAP" id="MF_00636">
    <property type="entry name" value="RapZ_like"/>
    <property type="match status" value="1"/>
</dbReference>
<dbReference type="InterPro" id="IPR027417">
    <property type="entry name" value="P-loop_NTPase"/>
</dbReference>
<dbReference type="InterPro" id="IPR005337">
    <property type="entry name" value="RapZ-like"/>
</dbReference>
<dbReference type="InterPro" id="IPR053930">
    <property type="entry name" value="RapZ-like_N"/>
</dbReference>
<dbReference type="InterPro" id="IPR053931">
    <property type="entry name" value="RapZ_C"/>
</dbReference>
<dbReference type="NCBIfam" id="NF003828">
    <property type="entry name" value="PRK05416.1"/>
    <property type="match status" value="1"/>
</dbReference>
<dbReference type="PANTHER" id="PTHR30448">
    <property type="entry name" value="RNASE ADAPTER PROTEIN RAPZ"/>
    <property type="match status" value="1"/>
</dbReference>
<dbReference type="PANTHER" id="PTHR30448:SF0">
    <property type="entry name" value="RNASE ADAPTER PROTEIN RAPZ"/>
    <property type="match status" value="1"/>
</dbReference>
<dbReference type="Pfam" id="PF22740">
    <property type="entry name" value="PapZ_C"/>
    <property type="match status" value="1"/>
</dbReference>
<dbReference type="Pfam" id="PF03668">
    <property type="entry name" value="RapZ-like_N"/>
    <property type="match status" value="1"/>
</dbReference>
<dbReference type="PIRSF" id="PIRSF005052">
    <property type="entry name" value="P-loopkin"/>
    <property type="match status" value="1"/>
</dbReference>
<dbReference type="SUPFAM" id="SSF52540">
    <property type="entry name" value="P-loop containing nucleoside triphosphate hydrolases"/>
    <property type="match status" value="1"/>
</dbReference>
<name>Y462_STRPQ</name>
<feature type="chain" id="PRO_0000411628" description="Nucleotide-binding protein SPs1393">
    <location>
        <begin position="1"/>
        <end position="296"/>
    </location>
</feature>
<feature type="binding site" evidence="1">
    <location>
        <begin position="13"/>
        <end position="20"/>
    </location>
    <ligand>
        <name>ATP</name>
        <dbReference type="ChEBI" id="CHEBI:30616"/>
    </ligand>
</feature>
<feature type="binding site" evidence="1">
    <location>
        <begin position="63"/>
        <end position="66"/>
    </location>
    <ligand>
        <name>GTP</name>
        <dbReference type="ChEBI" id="CHEBI:37565"/>
    </ligand>
</feature>
<accession>P0DG77</accession>
<accession>P67114</accession>
<accession>Q9A0R8</accession>
<comment type="function">
    <text evidence="1">Displays ATPase and GTPase activities.</text>
</comment>
<comment type="similarity">
    <text evidence="1">Belongs to the RapZ-like family.</text>
</comment>
<gene>
    <name type="ordered locus">SPs1393</name>
</gene>
<organism>
    <name type="scientific">Streptococcus pyogenes serotype M3 (strain SSI-1)</name>
    <dbReference type="NCBI Taxonomy" id="193567"/>
    <lineage>
        <taxon>Bacteria</taxon>
        <taxon>Bacillati</taxon>
        <taxon>Bacillota</taxon>
        <taxon>Bacilli</taxon>
        <taxon>Lactobacillales</taxon>
        <taxon>Streptococcaceae</taxon>
        <taxon>Streptococcus</taxon>
    </lineage>
</organism>
<sequence length="296" mass="33587">MSDKHINLVIVTGMSGAGKTVAIQSFEDLGYFTIDNMPPALVPKFLELIEQTNENRRVALVVDMRSRLFFKEINSTLDSIESNPSIDFRILFLDATDGELVSRYKETRRSHPLAADGRVLDGIRLERELLSPLKSMSQHVVDTTKLTPRQLRKTISDQFSEGSNQASFRIEVMSFGFKYGLPLDADLVFDVRFLPNPYYQVELREKTGLDEDVFNYVMSHPESEVFYKHLLNLIVPILPAYQKEGKSVLTVAIGCTGGQHRSVAFAHCLAESLATDWSVNESHRDQNRRKETVNRS</sequence>
<protein>
    <recommendedName>
        <fullName evidence="1">Nucleotide-binding protein SPs1393</fullName>
    </recommendedName>
</protein>